<organism>
    <name type="scientific">Pleurastrum terricola</name>
    <name type="common">Filamentous green alga</name>
    <name type="synonym">Leptosira terrestris</name>
    <dbReference type="NCBI Taxonomy" id="34116"/>
    <lineage>
        <taxon>Eukaryota</taxon>
        <taxon>Viridiplantae</taxon>
        <taxon>Chlorophyta</taxon>
        <taxon>core chlorophytes</taxon>
        <taxon>Chlorophyceae</taxon>
        <taxon>CS clade</taxon>
        <taxon>Chlamydomonadales</taxon>
        <taxon>Pleurastraceae</taxon>
        <taxon>Pleurastrum</taxon>
    </lineage>
</organism>
<protein>
    <recommendedName>
        <fullName evidence="1">ATP synthase subunit alpha, chloroplastic</fullName>
        <ecNumber evidence="1">7.1.2.2</ecNumber>
    </recommendedName>
    <alternativeName>
        <fullName evidence="1">ATP synthase F1 sector subunit alpha</fullName>
    </alternativeName>
    <alternativeName>
        <fullName evidence="1">F-ATPase subunit alpha</fullName>
    </alternativeName>
</protein>
<name>ATPA_PLETE</name>
<comment type="function">
    <text evidence="1">Produces ATP from ADP in the presence of a proton gradient across the membrane. The alpha chain is a regulatory subunit.</text>
</comment>
<comment type="catalytic activity">
    <reaction evidence="1">
        <text>ATP + H2O + 4 H(+)(in) = ADP + phosphate + 5 H(+)(out)</text>
        <dbReference type="Rhea" id="RHEA:57720"/>
        <dbReference type="ChEBI" id="CHEBI:15377"/>
        <dbReference type="ChEBI" id="CHEBI:15378"/>
        <dbReference type="ChEBI" id="CHEBI:30616"/>
        <dbReference type="ChEBI" id="CHEBI:43474"/>
        <dbReference type="ChEBI" id="CHEBI:456216"/>
        <dbReference type="EC" id="7.1.2.2"/>
    </reaction>
</comment>
<comment type="subunit">
    <text evidence="1">F-type ATPases have 2 components, CF(1) - the catalytic core - and CF(0) - the membrane proton channel. CF(1) has five subunits: alpha(3), beta(3), gamma(1), delta(1), epsilon(1). CF(0) has four main subunits: a, b, b' and c.</text>
</comment>
<comment type="subcellular location">
    <subcellularLocation>
        <location evidence="1">Plastid</location>
        <location evidence="1">Chloroplast thylakoid membrane</location>
        <topology evidence="1">Peripheral membrane protein</topology>
    </subcellularLocation>
</comment>
<comment type="similarity">
    <text evidence="1">Belongs to the ATPase alpha/beta chains family.</text>
</comment>
<feature type="chain" id="PRO_0000339093" description="ATP synthase subunit alpha, chloroplastic">
    <location>
        <begin position="1"/>
        <end position="506"/>
    </location>
</feature>
<feature type="binding site" evidence="1">
    <location>
        <begin position="172"/>
        <end position="179"/>
    </location>
    <ligand>
        <name>ATP</name>
        <dbReference type="ChEBI" id="CHEBI:30616"/>
    </ligand>
</feature>
<feature type="site" description="Required for activity" evidence="1">
    <location>
        <position position="365"/>
    </location>
</feature>
<accession>A6YG64</accession>
<evidence type="ECO:0000255" key="1">
    <source>
        <dbReference type="HAMAP-Rule" id="MF_01346"/>
    </source>
</evidence>
<gene>
    <name evidence="1" type="primary">atpA</name>
</gene>
<geneLocation type="chloroplast"/>
<dbReference type="EC" id="7.1.2.2" evidence="1"/>
<dbReference type="EMBL" id="EF506945">
    <property type="protein sequence ID" value="ABO69285.1"/>
    <property type="molecule type" value="Genomic_DNA"/>
</dbReference>
<dbReference type="RefSeq" id="YP_001382141.1">
    <property type="nucleotide sequence ID" value="NC_009681.1"/>
</dbReference>
<dbReference type="SMR" id="A6YG64"/>
<dbReference type="GeneID" id="5383720"/>
<dbReference type="GO" id="GO:0009535">
    <property type="term" value="C:chloroplast thylakoid membrane"/>
    <property type="evidence" value="ECO:0007669"/>
    <property type="project" value="UniProtKB-SubCell"/>
</dbReference>
<dbReference type="GO" id="GO:0045259">
    <property type="term" value="C:proton-transporting ATP synthase complex"/>
    <property type="evidence" value="ECO:0007669"/>
    <property type="project" value="UniProtKB-KW"/>
</dbReference>
<dbReference type="GO" id="GO:0043531">
    <property type="term" value="F:ADP binding"/>
    <property type="evidence" value="ECO:0007669"/>
    <property type="project" value="TreeGrafter"/>
</dbReference>
<dbReference type="GO" id="GO:0005524">
    <property type="term" value="F:ATP binding"/>
    <property type="evidence" value="ECO:0007669"/>
    <property type="project" value="UniProtKB-UniRule"/>
</dbReference>
<dbReference type="GO" id="GO:0046933">
    <property type="term" value="F:proton-transporting ATP synthase activity, rotational mechanism"/>
    <property type="evidence" value="ECO:0007669"/>
    <property type="project" value="UniProtKB-UniRule"/>
</dbReference>
<dbReference type="CDD" id="cd18113">
    <property type="entry name" value="ATP-synt_F1_alpha_C"/>
    <property type="match status" value="1"/>
</dbReference>
<dbReference type="CDD" id="cd18116">
    <property type="entry name" value="ATP-synt_F1_alpha_N"/>
    <property type="match status" value="1"/>
</dbReference>
<dbReference type="CDD" id="cd01132">
    <property type="entry name" value="F1-ATPase_alpha_CD"/>
    <property type="match status" value="1"/>
</dbReference>
<dbReference type="FunFam" id="1.20.150.20:FF:000001">
    <property type="entry name" value="ATP synthase subunit alpha"/>
    <property type="match status" value="1"/>
</dbReference>
<dbReference type="FunFam" id="2.40.30.20:FF:000001">
    <property type="entry name" value="ATP synthase subunit alpha"/>
    <property type="match status" value="1"/>
</dbReference>
<dbReference type="FunFam" id="3.40.50.300:FF:000002">
    <property type="entry name" value="ATP synthase subunit alpha"/>
    <property type="match status" value="1"/>
</dbReference>
<dbReference type="Gene3D" id="2.40.30.20">
    <property type="match status" value="1"/>
</dbReference>
<dbReference type="Gene3D" id="1.20.150.20">
    <property type="entry name" value="ATP synthase alpha/beta chain, C-terminal domain"/>
    <property type="match status" value="1"/>
</dbReference>
<dbReference type="Gene3D" id="3.40.50.300">
    <property type="entry name" value="P-loop containing nucleotide triphosphate hydrolases"/>
    <property type="match status" value="1"/>
</dbReference>
<dbReference type="HAMAP" id="MF_01346">
    <property type="entry name" value="ATP_synth_alpha_bact"/>
    <property type="match status" value="1"/>
</dbReference>
<dbReference type="InterPro" id="IPR023366">
    <property type="entry name" value="ATP_synth_asu-like_sf"/>
</dbReference>
<dbReference type="InterPro" id="IPR000793">
    <property type="entry name" value="ATP_synth_asu_C"/>
</dbReference>
<dbReference type="InterPro" id="IPR038376">
    <property type="entry name" value="ATP_synth_asu_C_sf"/>
</dbReference>
<dbReference type="InterPro" id="IPR033732">
    <property type="entry name" value="ATP_synth_F1_a_nt-bd_dom"/>
</dbReference>
<dbReference type="InterPro" id="IPR005294">
    <property type="entry name" value="ATP_synth_F1_asu"/>
</dbReference>
<dbReference type="InterPro" id="IPR020003">
    <property type="entry name" value="ATPase_a/bsu_AS"/>
</dbReference>
<dbReference type="InterPro" id="IPR004100">
    <property type="entry name" value="ATPase_F1/V1/A1_a/bsu_N"/>
</dbReference>
<dbReference type="InterPro" id="IPR036121">
    <property type="entry name" value="ATPase_F1/V1/A1_a/bsu_N_sf"/>
</dbReference>
<dbReference type="InterPro" id="IPR000194">
    <property type="entry name" value="ATPase_F1/V1/A1_a/bsu_nucl-bd"/>
</dbReference>
<dbReference type="InterPro" id="IPR027417">
    <property type="entry name" value="P-loop_NTPase"/>
</dbReference>
<dbReference type="NCBIfam" id="TIGR00962">
    <property type="entry name" value="atpA"/>
    <property type="match status" value="1"/>
</dbReference>
<dbReference type="NCBIfam" id="NF009884">
    <property type="entry name" value="PRK13343.1"/>
    <property type="match status" value="1"/>
</dbReference>
<dbReference type="PANTHER" id="PTHR48082">
    <property type="entry name" value="ATP SYNTHASE SUBUNIT ALPHA, MITOCHONDRIAL"/>
    <property type="match status" value="1"/>
</dbReference>
<dbReference type="PANTHER" id="PTHR48082:SF2">
    <property type="entry name" value="ATP SYNTHASE SUBUNIT ALPHA, MITOCHONDRIAL"/>
    <property type="match status" value="1"/>
</dbReference>
<dbReference type="Pfam" id="PF00006">
    <property type="entry name" value="ATP-synt_ab"/>
    <property type="match status" value="1"/>
</dbReference>
<dbReference type="Pfam" id="PF00306">
    <property type="entry name" value="ATP-synt_ab_C"/>
    <property type="match status" value="1"/>
</dbReference>
<dbReference type="Pfam" id="PF02874">
    <property type="entry name" value="ATP-synt_ab_N"/>
    <property type="match status" value="1"/>
</dbReference>
<dbReference type="PIRSF" id="PIRSF039088">
    <property type="entry name" value="F_ATPase_subunit_alpha"/>
    <property type="match status" value="1"/>
</dbReference>
<dbReference type="SUPFAM" id="SSF47917">
    <property type="entry name" value="C-terminal domain of alpha and beta subunits of F1 ATP synthase"/>
    <property type="match status" value="1"/>
</dbReference>
<dbReference type="SUPFAM" id="SSF50615">
    <property type="entry name" value="N-terminal domain of alpha and beta subunits of F1 ATP synthase"/>
    <property type="match status" value="1"/>
</dbReference>
<dbReference type="SUPFAM" id="SSF52540">
    <property type="entry name" value="P-loop containing nucleoside triphosphate hydrolases"/>
    <property type="match status" value="1"/>
</dbReference>
<dbReference type="PROSITE" id="PS00152">
    <property type="entry name" value="ATPASE_ALPHA_BETA"/>
    <property type="match status" value="1"/>
</dbReference>
<keyword id="KW-0066">ATP synthesis</keyword>
<keyword id="KW-0067">ATP-binding</keyword>
<keyword id="KW-0139">CF(1)</keyword>
<keyword id="KW-0150">Chloroplast</keyword>
<keyword id="KW-0375">Hydrogen ion transport</keyword>
<keyword id="KW-0406">Ion transport</keyword>
<keyword id="KW-0472">Membrane</keyword>
<keyword id="KW-0547">Nucleotide-binding</keyword>
<keyword id="KW-0934">Plastid</keyword>
<keyword id="KW-0793">Thylakoid</keyword>
<keyword id="KW-1278">Translocase</keyword>
<keyword id="KW-0813">Transport</keyword>
<proteinExistence type="inferred from homology"/>
<sequence length="506" mass="54603">MVKKNIRADEISSIIRQQIEQYNDEVTVVNVGTVFQVGDGIARIYGLDNVMAGELLEFADGTVGLALNLETKNVGAVLMGDGLTVQEGTAVRGTGKVAQIPVGEAFLGRIVNALAEPIDGKGEIQTTETRLIESNAPGIISRRSVHEPLQTGLVAVDAMIPIGRGQRELIIGDRQTGKTAIATDTILNQKGKDVICVYVAIGQKASSIAQVVNTLTERGALDYTIIVAATADSPATLQYLAPYTGAALAEYFMYTGRHTLVIYDDLSKQAQAYRQMSLLLRRPPGREAYPGDVFYLHSRLLERAAKLSDQLGSGSMTALPIVETQEGDVSAYIPTNVISITDGQIFLSADIFNSGLRPAVNVGISVSRVGSAAQLPIMKQVAGTLKLELAQFAELEGFSQFSSDLDQASQNQLARGQRLREILKQSQASPLSVPDQVASIYAGTNGFLQKLAVNQVRDFLVGLREFLDKRKPEYLEAVNSEKKLTPKVKDILNSAISEFLDEFLAS</sequence>
<reference key="1">
    <citation type="journal article" date="2007" name="BMC Genomics">
        <title>The chloroplast genome sequence of the green alga Leptosira terrestris: multiple losses of the inverted repeat and extensive genome rearrangements within the Trebouxiophyceae.</title>
        <authorList>
            <person name="de Cambiaire J.-C."/>
            <person name="Otis C."/>
            <person name="Turmel M."/>
            <person name="Lemieux C."/>
        </authorList>
    </citation>
    <scope>NUCLEOTIDE SEQUENCE [LARGE SCALE GENOMIC DNA]</scope>
    <source>
        <strain>CCAP 463/2 / UTEX 333</strain>
    </source>
</reference>